<evidence type="ECO:0000250" key="1"/>
<evidence type="ECO:0000305" key="2"/>
<reference key="1">
    <citation type="journal article" date="1997" name="Science">
        <title>The complete genome sequence of Escherichia coli K-12.</title>
        <authorList>
            <person name="Blattner F.R."/>
            <person name="Plunkett G. III"/>
            <person name="Bloch C.A."/>
            <person name="Perna N.T."/>
            <person name="Burland V."/>
            <person name="Riley M."/>
            <person name="Collado-Vides J."/>
            <person name="Glasner J.D."/>
            <person name="Rode C.K."/>
            <person name="Mayhew G.F."/>
            <person name="Gregor J."/>
            <person name="Davis N.W."/>
            <person name="Kirkpatrick H.A."/>
            <person name="Goeden M.A."/>
            <person name="Rose D.J."/>
            <person name="Mau B."/>
            <person name="Shao Y."/>
        </authorList>
    </citation>
    <scope>NUCLEOTIDE SEQUENCE [LARGE SCALE GENOMIC DNA]</scope>
    <source>
        <strain>K12 / MG1655 / ATCC 47076</strain>
    </source>
</reference>
<reference key="2">
    <citation type="journal article" date="2006" name="Mol. Syst. Biol.">
        <title>Highly accurate genome sequences of Escherichia coli K-12 strains MG1655 and W3110.</title>
        <authorList>
            <person name="Hayashi K."/>
            <person name="Morooka N."/>
            <person name="Yamamoto Y."/>
            <person name="Fujita K."/>
            <person name="Isono K."/>
            <person name="Choi S."/>
            <person name="Ohtsubo E."/>
            <person name="Baba T."/>
            <person name="Wanner B.L."/>
            <person name="Mori H."/>
            <person name="Horiuchi T."/>
        </authorList>
    </citation>
    <scope>NUCLEOTIDE SEQUENCE [LARGE SCALE GENOMIC DNA]</scope>
    <source>
        <strain>K12 / W3110 / ATCC 27325 / DSM 5911</strain>
    </source>
</reference>
<gene>
    <name type="primary">yddH</name>
    <name type="ordered locus">b1462</name>
    <name type="ordered locus">JW1457</name>
</gene>
<accession>P76121</accession>
<accession>Q2MBA8</accession>
<keyword id="KW-0285">Flavoprotein</keyword>
<keyword id="KW-0288">FMN</keyword>
<keyword id="KW-1185">Reference proteome</keyword>
<protein>
    <recommendedName>
        <fullName>Uncharacterized protein YddH</fullName>
    </recommendedName>
</protein>
<organism>
    <name type="scientific">Escherichia coli (strain K12)</name>
    <dbReference type="NCBI Taxonomy" id="83333"/>
    <lineage>
        <taxon>Bacteria</taxon>
        <taxon>Pseudomonadati</taxon>
        <taxon>Pseudomonadota</taxon>
        <taxon>Gammaproteobacteria</taxon>
        <taxon>Enterobacterales</taxon>
        <taxon>Enterobacteriaceae</taxon>
        <taxon>Escherichia</taxon>
    </lineage>
</organism>
<feature type="chain" id="PRO_0000085525" description="Uncharacterized protein YddH">
    <location>
        <begin position="1"/>
        <end position="189"/>
    </location>
</feature>
<proteinExistence type="inferred from homology"/>
<sequence length="189" mass="20967">MSRFIPIELHHASRLLNHGPTVLITSFDEQSQRRNIMAAAWSMPVEFEPPRVAIVVDKSTWTRELIEHNGKFGIVIPGVAATNWTWAVGSVSGRDEDKFNCYGIPVVRGPVFGLPLVEEKCLAWMECRLLPATSAQEEYDTLFGEVVSAAADARVFVEGRWQFDDDKLNTLHHLGAGTFVTSGKRVTAG</sequence>
<name>YDDH_ECOLI</name>
<comment type="cofactor">
    <cofactor evidence="1">
        <name>FMN</name>
        <dbReference type="ChEBI" id="CHEBI:58210"/>
    </cofactor>
</comment>
<comment type="similarity">
    <text evidence="2">Belongs to the flavoredoxin family.</text>
</comment>
<dbReference type="EMBL" id="U00096">
    <property type="protein sequence ID" value="AAC74544.2"/>
    <property type="molecule type" value="Genomic_DNA"/>
</dbReference>
<dbReference type="EMBL" id="AP009048">
    <property type="protein sequence ID" value="BAE76448.1"/>
    <property type="molecule type" value="Genomic_DNA"/>
</dbReference>
<dbReference type="PIR" id="A64899">
    <property type="entry name" value="A64899"/>
</dbReference>
<dbReference type="RefSeq" id="NP_415979.2">
    <property type="nucleotide sequence ID" value="NC_000913.3"/>
</dbReference>
<dbReference type="RefSeq" id="WP_000085899.1">
    <property type="nucleotide sequence ID" value="NZ_SSZK01000038.1"/>
</dbReference>
<dbReference type="SMR" id="P76121"/>
<dbReference type="BioGRID" id="4262038">
    <property type="interactions" value="30"/>
</dbReference>
<dbReference type="BioGRID" id="850552">
    <property type="interactions" value="3"/>
</dbReference>
<dbReference type="FunCoup" id="P76121">
    <property type="interactions" value="167"/>
</dbReference>
<dbReference type="IntAct" id="P76121">
    <property type="interactions" value="13"/>
</dbReference>
<dbReference type="STRING" id="511145.b1462"/>
<dbReference type="PaxDb" id="511145-b1462"/>
<dbReference type="EnsemblBacteria" id="AAC74544">
    <property type="protein sequence ID" value="AAC74544"/>
    <property type="gene ID" value="b1462"/>
</dbReference>
<dbReference type="GeneID" id="946192"/>
<dbReference type="KEGG" id="ecj:JW1457"/>
<dbReference type="KEGG" id="eco:b1462"/>
<dbReference type="KEGG" id="ecoc:C3026_08490"/>
<dbReference type="PATRIC" id="fig|511145.12.peg.1528"/>
<dbReference type="EchoBASE" id="EB3541"/>
<dbReference type="eggNOG" id="COG1853">
    <property type="taxonomic scope" value="Bacteria"/>
</dbReference>
<dbReference type="HOGENOM" id="CLU_059021_5_4_6"/>
<dbReference type="InParanoid" id="P76121"/>
<dbReference type="OMA" id="WLECRLL"/>
<dbReference type="OrthoDB" id="9792436at2"/>
<dbReference type="PhylomeDB" id="P76121"/>
<dbReference type="BioCyc" id="EcoCyc:G6769-MONOMER"/>
<dbReference type="PRO" id="PR:P76121"/>
<dbReference type="Proteomes" id="UP000000625">
    <property type="component" value="Chromosome"/>
</dbReference>
<dbReference type="GO" id="GO:0010181">
    <property type="term" value="F:FMN binding"/>
    <property type="evidence" value="ECO:0007669"/>
    <property type="project" value="InterPro"/>
</dbReference>
<dbReference type="GO" id="GO:0016646">
    <property type="term" value="F:oxidoreductase activity, acting on the CH-NH group of donors, NAD or NADP as acceptor"/>
    <property type="evidence" value="ECO:0007669"/>
    <property type="project" value="UniProtKB-ARBA"/>
</dbReference>
<dbReference type="Gene3D" id="2.30.110.10">
    <property type="entry name" value="Electron Transport, Fmn-binding Protein, Chain A"/>
    <property type="match status" value="1"/>
</dbReference>
<dbReference type="InterPro" id="IPR002563">
    <property type="entry name" value="Flavin_Rdtase-like_dom"/>
</dbReference>
<dbReference type="InterPro" id="IPR052174">
    <property type="entry name" value="Flavoredoxin"/>
</dbReference>
<dbReference type="InterPro" id="IPR012349">
    <property type="entry name" value="Split_barrel_FMN-bd"/>
</dbReference>
<dbReference type="PANTHER" id="PTHR43567:SF1">
    <property type="entry name" value="FLAVOREDOXIN"/>
    <property type="match status" value="1"/>
</dbReference>
<dbReference type="PANTHER" id="PTHR43567">
    <property type="entry name" value="FLAVOREDOXIN-RELATED-RELATED"/>
    <property type="match status" value="1"/>
</dbReference>
<dbReference type="Pfam" id="PF01613">
    <property type="entry name" value="Flavin_Reduct"/>
    <property type="match status" value="1"/>
</dbReference>
<dbReference type="SMART" id="SM00903">
    <property type="entry name" value="Flavin_Reduct"/>
    <property type="match status" value="1"/>
</dbReference>
<dbReference type="SUPFAM" id="SSF50475">
    <property type="entry name" value="FMN-binding split barrel"/>
    <property type="match status" value="1"/>
</dbReference>